<organism>
    <name type="scientific">Mus musculus</name>
    <name type="common">Mouse</name>
    <dbReference type="NCBI Taxonomy" id="10090"/>
    <lineage>
        <taxon>Eukaryota</taxon>
        <taxon>Metazoa</taxon>
        <taxon>Chordata</taxon>
        <taxon>Craniata</taxon>
        <taxon>Vertebrata</taxon>
        <taxon>Euteleostomi</taxon>
        <taxon>Mammalia</taxon>
        <taxon>Eutheria</taxon>
        <taxon>Euarchontoglires</taxon>
        <taxon>Glires</taxon>
        <taxon>Rodentia</taxon>
        <taxon>Myomorpha</taxon>
        <taxon>Muroidea</taxon>
        <taxon>Muridae</taxon>
        <taxon>Murinae</taxon>
        <taxon>Mus</taxon>
        <taxon>Mus</taxon>
    </lineage>
</organism>
<feature type="chain" id="PRO_0000259559" description="Integrator complex subunit 9">
    <location>
        <begin position="1"/>
        <end position="658"/>
    </location>
</feature>
<feature type="region of interest" description="Disordered" evidence="2">
    <location>
        <begin position="548"/>
        <end position="572"/>
    </location>
</feature>
<feature type="short sequence motif" description="Nuclear localization signal" evidence="1">
    <location>
        <begin position="566"/>
        <end position="570"/>
    </location>
</feature>
<feature type="cross-link" description="Glycyl lysine isopeptide (Lys-Gly) (interchain with G-Cter in SUMO2)" evidence="1">
    <location>
        <position position="58"/>
    </location>
</feature>
<feature type="splice variant" id="VSP_021470" description="In isoform 2." evidence="4">
    <original>LADSLVPMEIKPGISLATVSAVLHTKDNKHVLQPPPKPTQPTSSKKRKRVNEDIP</original>
    <variation>VSCCPFTLKSLLSTRVHSGHCQSLKTEGRKEHRPPGKLCYVPYVAFTGMALQVTS</variation>
    <location>
        <begin position="522"/>
        <end position="576"/>
    </location>
</feature>
<feature type="splice variant" id="VSP_021471" description="In isoform 2." evidence="4">
    <location>
        <begin position="577"/>
        <end position="658"/>
    </location>
</feature>
<dbReference type="EMBL" id="AK038979">
    <property type="protein sequence ID" value="BAC30191.1"/>
    <property type="molecule type" value="mRNA"/>
</dbReference>
<dbReference type="EMBL" id="AK077634">
    <property type="protein sequence ID" value="BAC36917.1"/>
    <property type="status" value="ALT_INIT"/>
    <property type="molecule type" value="mRNA"/>
</dbReference>
<dbReference type="EMBL" id="AK136992">
    <property type="protein sequence ID" value="BAE23199.1"/>
    <property type="molecule type" value="mRNA"/>
</dbReference>
<dbReference type="EMBL" id="AK150195">
    <property type="protein sequence ID" value="BAE29371.1"/>
    <property type="molecule type" value="mRNA"/>
</dbReference>
<dbReference type="EMBL" id="BC028953">
    <property type="protein sequence ID" value="AAH28953.1"/>
    <property type="molecule type" value="mRNA"/>
</dbReference>
<dbReference type="EMBL" id="BC055700">
    <property type="protein sequence ID" value="AAH55700.1"/>
    <property type="molecule type" value="mRNA"/>
</dbReference>
<dbReference type="CCDS" id="CCDS27210.1">
    <molecule id="Q8K114-1"/>
</dbReference>
<dbReference type="RefSeq" id="NP_001240660.1">
    <property type="nucleotide sequence ID" value="NM_001253731.1"/>
</dbReference>
<dbReference type="RefSeq" id="NP_700463.2">
    <molecule id="Q8K114-1"/>
    <property type="nucleotide sequence ID" value="NM_153414.4"/>
</dbReference>
<dbReference type="SMR" id="Q8K114"/>
<dbReference type="BioGRID" id="229188">
    <property type="interactions" value="4"/>
</dbReference>
<dbReference type="FunCoup" id="Q8K114">
    <property type="interactions" value="4440"/>
</dbReference>
<dbReference type="STRING" id="10090.ENSMUSP00000045552"/>
<dbReference type="iPTMnet" id="Q8K114"/>
<dbReference type="PhosphoSitePlus" id="Q8K114"/>
<dbReference type="PaxDb" id="10090-ENSMUSP00000045552"/>
<dbReference type="PeptideAtlas" id="Q8K114"/>
<dbReference type="ProteomicsDB" id="301655">
    <molecule id="Q8K114-1"/>
</dbReference>
<dbReference type="ProteomicsDB" id="301656">
    <molecule id="Q8K114-2"/>
</dbReference>
<dbReference type="Pumba" id="Q8K114"/>
<dbReference type="Antibodypedia" id="23131">
    <property type="antibodies" value="136 antibodies from 23 providers"/>
</dbReference>
<dbReference type="DNASU" id="210925"/>
<dbReference type="Ensembl" id="ENSMUST00000043914.8">
    <molecule id="Q8K114-1"/>
    <property type="protein sequence ID" value="ENSMUSP00000045552.7"/>
    <property type="gene ID" value="ENSMUSG00000021975.10"/>
</dbReference>
<dbReference type="GeneID" id="210925"/>
<dbReference type="KEGG" id="mmu:210925"/>
<dbReference type="UCSC" id="uc007uiv.1">
    <molecule id="Q8K114-2"/>
    <property type="organism name" value="mouse"/>
</dbReference>
<dbReference type="UCSC" id="uc007uiw.2">
    <molecule id="Q8K114-1"/>
    <property type="organism name" value="mouse"/>
</dbReference>
<dbReference type="AGR" id="MGI:1098533"/>
<dbReference type="CTD" id="55756"/>
<dbReference type="MGI" id="MGI:1098533">
    <property type="gene designation" value="Ints9"/>
</dbReference>
<dbReference type="VEuPathDB" id="HostDB:ENSMUSG00000021975"/>
<dbReference type="eggNOG" id="KOG1138">
    <property type="taxonomic scope" value="Eukaryota"/>
</dbReference>
<dbReference type="GeneTree" id="ENSGT00390000001445"/>
<dbReference type="InParanoid" id="Q8K114"/>
<dbReference type="OMA" id="AMKAVHC"/>
<dbReference type="OrthoDB" id="5600060at2759"/>
<dbReference type="PhylomeDB" id="Q8K114"/>
<dbReference type="TreeFam" id="TF314100"/>
<dbReference type="Reactome" id="R-MMU-6807505">
    <property type="pathway name" value="RNA polymerase II transcribes snRNA genes"/>
</dbReference>
<dbReference type="BioGRID-ORCS" id="210925">
    <property type="hits" value="26 hits in 83 CRISPR screens"/>
</dbReference>
<dbReference type="ChiTaRS" id="Ints9">
    <property type="organism name" value="mouse"/>
</dbReference>
<dbReference type="PRO" id="PR:Q8K114"/>
<dbReference type="Proteomes" id="UP000000589">
    <property type="component" value="Chromosome 14"/>
</dbReference>
<dbReference type="RNAct" id="Q8K114">
    <property type="molecule type" value="protein"/>
</dbReference>
<dbReference type="Bgee" id="ENSMUSG00000021975">
    <property type="expression patterns" value="Expressed in primary oocyte and 257 other cell types or tissues"/>
</dbReference>
<dbReference type="ExpressionAtlas" id="Q8K114">
    <property type="expression patterns" value="baseline and differential"/>
</dbReference>
<dbReference type="GO" id="GO:0005737">
    <property type="term" value="C:cytoplasm"/>
    <property type="evidence" value="ECO:0000250"/>
    <property type="project" value="UniProtKB"/>
</dbReference>
<dbReference type="GO" id="GO:0005829">
    <property type="term" value="C:cytosol"/>
    <property type="evidence" value="ECO:0007669"/>
    <property type="project" value="Ensembl"/>
</dbReference>
<dbReference type="GO" id="GO:0160232">
    <property type="term" value="C:INTAC complex"/>
    <property type="evidence" value="ECO:0000250"/>
    <property type="project" value="UniProtKB"/>
</dbReference>
<dbReference type="GO" id="GO:0032039">
    <property type="term" value="C:integrator complex"/>
    <property type="evidence" value="ECO:0000250"/>
    <property type="project" value="UniProtKB"/>
</dbReference>
<dbReference type="GO" id="GO:0005654">
    <property type="term" value="C:nucleoplasm"/>
    <property type="evidence" value="ECO:0007669"/>
    <property type="project" value="Ensembl"/>
</dbReference>
<dbReference type="GO" id="GO:0005634">
    <property type="term" value="C:nucleus"/>
    <property type="evidence" value="ECO:0000250"/>
    <property type="project" value="UniProtKB"/>
</dbReference>
<dbReference type="GO" id="GO:0030512">
    <property type="term" value="P:negative regulation of transforming growth factor beta receptor signaling pathway"/>
    <property type="evidence" value="ECO:0007669"/>
    <property type="project" value="Ensembl"/>
</dbReference>
<dbReference type="GO" id="GO:0160240">
    <property type="term" value="P:RNA polymerase II transcription initiation surveillance"/>
    <property type="evidence" value="ECO:0000250"/>
    <property type="project" value="UniProtKB"/>
</dbReference>
<dbReference type="GO" id="GO:0034472">
    <property type="term" value="P:snRNA 3'-end processing"/>
    <property type="evidence" value="ECO:0000250"/>
    <property type="project" value="UniProtKB"/>
</dbReference>
<dbReference type="CDD" id="cd16294">
    <property type="entry name" value="Int9-like_MBL-fold"/>
    <property type="match status" value="1"/>
</dbReference>
<dbReference type="FunFam" id="3.40.50.10890:FF:000003">
    <property type="entry name" value="Integrator complex subunit 9"/>
    <property type="match status" value="1"/>
</dbReference>
<dbReference type="Gene3D" id="3.40.50.10890">
    <property type="match status" value="1"/>
</dbReference>
<dbReference type="Gene3D" id="3.60.15.10">
    <property type="entry name" value="Ribonuclease Z/Hydroxyacylglutathione hydrolase-like"/>
    <property type="match status" value="1"/>
</dbReference>
<dbReference type="InterPro" id="IPR022712">
    <property type="entry name" value="Beta_Casp"/>
</dbReference>
<dbReference type="InterPro" id="IPR027074">
    <property type="entry name" value="Integrator_9su"/>
</dbReference>
<dbReference type="InterPro" id="IPR048660">
    <property type="entry name" value="IntS9-like_C"/>
</dbReference>
<dbReference type="InterPro" id="IPR001279">
    <property type="entry name" value="Metallo-B-lactamas"/>
</dbReference>
<dbReference type="InterPro" id="IPR036866">
    <property type="entry name" value="RibonucZ/Hydroxyglut_hydro"/>
</dbReference>
<dbReference type="PANTHER" id="PTHR46094">
    <property type="entry name" value="INTEGRATOR COMPLEX SUBUNIT 9"/>
    <property type="match status" value="1"/>
</dbReference>
<dbReference type="PANTHER" id="PTHR46094:SF1">
    <property type="entry name" value="INTEGRATOR COMPLEX SUBUNIT 9"/>
    <property type="match status" value="1"/>
</dbReference>
<dbReference type="Pfam" id="PF10996">
    <property type="entry name" value="Beta-Casp"/>
    <property type="match status" value="1"/>
</dbReference>
<dbReference type="Pfam" id="PF21382">
    <property type="entry name" value="IntS9_C"/>
    <property type="match status" value="1"/>
</dbReference>
<dbReference type="Pfam" id="PF16661">
    <property type="entry name" value="Lactamase_B_6"/>
    <property type="match status" value="1"/>
</dbReference>
<dbReference type="SMART" id="SM01027">
    <property type="entry name" value="Beta-Casp"/>
    <property type="match status" value="1"/>
</dbReference>
<dbReference type="SUPFAM" id="SSF56281">
    <property type="entry name" value="Metallo-hydrolase/oxidoreductase"/>
    <property type="match status" value="1"/>
</dbReference>
<gene>
    <name type="primary">Ints9</name>
    <name type="synonym">D14Ertd231e</name>
</gene>
<evidence type="ECO:0000250" key="1">
    <source>
        <dbReference type="UniProtKB" id="Q9NV88"/>
    </source>
</evidence>
<evidence type="ECO:0000256" key="2">
    <source>
        <dbReference type="SAM" id="MobiDB-lite"/>
    </source>
</evidence>
<evidence type="ECO:0000269" key="3">
    <source>
    </source>
</evidence>
<evidence type="ECO:0000305" key="4"/>
<keyword id="KW-0025">Alternative splicing</keyword>
<keyword id="KW-0963">Cytoplasm</keyword>
<keyword id="KW-1017">Isopeptide bond</keyword>
<keyword id="KW-0539">Nucleus</keyword>
<keyword id="KW-1185">Reference proteome</keyword>
<keyword id="KW-0832">Ubl conjugation</keyword>
<name>INT9_MOUSE</name>
<accession>Q8K114</accession>
<accession>Q8BP62</accession>
<accession>Q8CAE4</accession>
<proteinExistence type="evidence at protein level"/>
<protein>
    <recommendedName>
        <fullName>Integrator complex subunit 9</fullName>
        <shortName>Int9</shortName>
    </recommendedName>
</protein>
<sequence length="658" mass="74078">MKLYCLSGHPTLPCNVLKFKSTTIMLDCGLDMTSTLNFLPLPLVQSPRLSNLPGWSLKDGNAFLDKELKECSGHVFVDSVPEFCLPETELIDLSTVDVILISNYHCMMALPYITEHTGFTGTVYATEPTMQIGRLLMEELVNFIERVPKAQSASLWKNKDIQRLLPSPLKDAVEVSTWRRCYTMQEVNSALSKIQLVGYSQKIELFGAVQVTPLSSGYALGSSNWIIQSHYEKVSYVSGSSLLTTHPQPMDQASLKNSDVLILTGLTQIPTANPDGMVGEFCSNLALTVRNGGNVLVPCYPSGVIYDLLECLYQYIDSAGLSNIPFYFISPVANSSLEFSQIFAEWLCHNKQSKVYLPEPPFPHAELIQTNKLKHYRSIHGDFSNDFRQPCVLFTGHPSLRFGDVVHFMELWGKSSLNTIIFTEPDFSYLEALAPYQPLAMKCIYCPIDTRLNFIQVSKLLKEVQPLHVVCPEQYTQPPPAQAHRMDLMIDCQPPAMSYRRAEVLALPFKRRYEKIEIMPELADSLVPMEIKPGISLATVSAVLHTKDNKHVLQPPPKPTQPTSSKKRKRVNEDIPDCKVLKPLLSGSIPVEQFVQTLEKHGFSDIKVEDTAKGHIVLLQEAETLIQIEEDSTHIICDNDETLRVRLRDLVLRFLQKF</sequence>
<comment type="function">
    <text evidence="1">Component of the integrator complex, a multiprotein complex that terminates RNA polymerase II (Pol II) transcription in the promoter-proximal region of genes. The integrator complex provides a quality checkpoint during transcription elongation by driving premature transcription termination of transcripts that are unfavorably configured for transcriptional elongation: the complex terminates transcription by (1) catalyzing dephosphorylation of the C-terminal domain (CTD) of Pol II subunit POLR2A/RPB1 and SUPT5H/SPT5, (2) degrading the exiting nascent RNA transcript via endonuclease activity and (3) promoting the release of Pol II from bound DNA. The integrator complex is also involved in terminating the synthesis of non-coding Pol II transcripts, such as enhancer RNAs (eRNAs), small nuclear RNAs (snRNAs), telomerase RNAs and long non-coding RNAs (lncRNAs). Mediates recruitment of cytoplasmic dynein to the nuclear envelope, probably as component of the integrator complex.</text>
</comment>
<comment type="subunit">
    <text evidence="1 3">Component of the Integrator complex, composed of core subunits INTS1, INTS2, INTS3, INTS4, INTS5, INTS6, INTS7, INTS8, INTS9/RC74, INTS10, INTS11/CPSF3L, INTS12, INTS13, INTS14 and INTS15 (By similarity). The core complex associates with protein phosphatase 2A subunits PPP2CA and PPP2R1A, to form the Integrator-PP2A (INTAC) complex (By similarity). INTS9 is part of the RNA endonuclease subcomplex, composed of INTS4, INTS9, INTS11 and inositol hexakisphosphate (InsP6) (By similarity). Interacts with WDR73; interaction is required for the assembly of the RNA endonuclease subcomplex in the cytoplasm (By similarity). Interacts with BRAT1; interaction is required for the assembly of the RNA endonuclease subcomplex (By similarity). Interacts with ESRRB, ESRRB is not a core component of the Integrator complex and this association is a bridge for the interaction with the multiprotein complex Integrator; attracts the transcriptional machinery (PubMed:26206133).</text>
</comment>
<comment type="subcellular location">
    <subcellularLocation>
        <location evidence="1">Nucleus</location>
    </subcellularLocation>
    <subcellularLocation>
        <location evidence="1">Cytoplasm</location>
    </subcellularLocation>
</comment>
<comment type="alternative products">
    <event type="alternative splicing"/>
    <isoform>
        <id>Q8K114-1</id>
        <name>1</name>
        <sequence type="displayed"/>
    </isoform>
    <isoform>
        <id>Q8K114-2</id>
        <name>2</name>
        <sequence type="described" ref="VSP_021470 VSP_021471"/>
    </isoform>
</comment>
<comment type="miscellaneous">
    <text>Although strongly related to RNA-specific endonuclease proteins, it lacks the HXHXDH motif that binds zinc and participates in the catalytic center. Its function as endonuclease is therefore unsure.</text>
</comment>
<comment type="similarity">
    <text evidence="4">Belongs to the metallo-beta-lactamase superfamily. RNA-metabolizing metallo-beta-lactamase-like family. INTS9 subfamily.</text>
</comment>
<comment type="sequence caution" evidence="4">
    <conflict type="erroneous initiation">
        <sequence resource="EMBL-CDS" id="BAC36917"/>
    </conflict>
    <text>Extended N-terminus.</text>
</comment>
<reference key="1">
    <citation type="journal article" date="2005" name="Science">
        <title>The transcriptional landscape of the mammalian genome.</title>
        <authorList>
            <person name="Carninci P."/>
            <person name="Kasukawa T."/>
            <person name="Katayama S."/>
            <person name="Gough J."/>
            <person name="Frith M.C."/>
            <person name="Maeda N."/>
            <person name="Oyama R."/>
            <person name="Ravasi T."/>
            <person name="Lenhard B."/>
            <person name="Wells C."/>
            <person name="Kodzius R."/>
            <person name="Shimokawa K."/>
            <person name="Bajic V.B."/>
            <person name="Brenner S.E."/>
            <person name="Batalov S."/>
            <person name="Forrest A.R."/>
            <person name="Zavolan M."/>
            <person name="Davis M.J."/>
            <person name="Wilming L.G."/>
            <person name="Aidinis V."/>
            <person name="Allen J.E."/>
            <person name="Ambesi-Impiombato A."/>
            <person name="Apweiler R."/>
            <person name="Aturaliya R.N."/>
            <person name="Bailey T.L."/>
            <person name="Bansal M."/>
            <person name="Baxter L."/>
            <person name="Beisel K.W."/>
            <person name="Bersano T."/>
            <person name="Bono H."/>
            <person name="Chalk A.M."/>
            <person name="Chiu K.P."/>
            <person name="Choudhary V."/>
            <person name="Christoffels A."/>
            <person name="Clutterbuck D.R."/>
            <person name="Crowe M.L."/>
            <person name="Dalla E."/>
            <person name="Dalrymple B.P."/>
            <person name="de Bono B."/>
            <person name="Della Gatta G."/>
            <person name="di Bernardo D."/>
            <person name="Down T."/>
            <person name="Engstrom P."/>
            <person name="Fagiolini M."/>
            <person name="Faulkner G."/>
            <person name="Fletcher C.F."/>
            <person name="Fukushima T."/>
            <person name="Furuno M."/>
            <person name="Futaki S."/>
            <person name="Gariboldi M."/>
            <person name="Georgii-Hemming P."/>
            <person name="Gingeras T.R."/>
            <person name="Gojobori T."/>
            <person name="Green R.E."/>
            <person name="Gustincich S."/>
            <person name="Harbers M."/>
            <person name="Hayashi Y."/>
            <person name="Hensch T.K."/>
            <person name="Hirokawa N."/>
            <person name="Hill D."/>
            <person name="Huminiecki L."/>
            <person name="Iacono M."/>
            <person name="Ikeo K."/>
            <person name="Iwama A."/>
            <person name="Ishikawa T."/>
            <person name="Jakt M."/>
            <person name="Kanapin A."/>
            <person name="Katoh M."/>
            <person name="Kawasawa Y."/>
            <person name="Kelso J."/>
            <person name="Kitamura H."/>
            <person name="Kitano H."/>
            <person name="Kollias G."/>
            <person name="Krishnan S.P."/>
            <person name="Kruger A."/>
            <person name="Kummerfeld S.K."/>
            <person name="Kurochkin I.V."/>
            <person name="Lareau L.F."/>
            <person name="Lazarevic D."/>
            <person name="Lipovich L."/>
            <person name="Liu J."/>
            <person name="Liuni S."/>
            <person name="McWilliam S."/>
            <person name="Madan Babu M."/>
            <person name="Madera M."/>
            <person name="Marchionni L."/>
            <person name="Matsuda H."/>
            <person name="Matsuzawa S."/>
            <person name="Miki H."/>
            <person name="Mignone F."/>
            <person name="Miyake S."/>
            <person name="Morris K."/>
            <person name="Mottagui-Tabar S."/>
            <person name="Mulder N."/>
            <person name="Nakano N."/>
            <person name="Nakauchi H."/>
            <person name="Ng P."/>
            <person name="Nilsson R."/>
            <person name="Nishiguchi S."/>
            <person name="Nishikawa S."/>
            <person name="Nori F."/>
            <person name="Ohara O."/>
            <person name="Okazaki Y."/>
            <person name="Orlando V."/>
            <person name="Pang K.C."/>
            <person name="Pavan W.J."/>
            <person name="Pavesi G."/>
            <person name="Pesole G."/>
            <person name="Petrovsky N."/>
            <person name="Piazza S."/>
            <person name="Reed J."/>
            <person name="Reid J.F."/>
            <person name="Ring B.Z."/>
            <person name="Ringwald M."/>
            <person name="Rost B."/>
            <person name="Ruan Y."/>
            <person name="Salzberg S.L."/>
            <person name="Sandelin A."/>
            <person name="Schneider C."/>
            <person name="Schoenbach C."/>
            <person name="Sekiguchi K."/>
            <person name="Semple C.A."/>
            <person name="Seno S."/>
            <person name="Sessa L."/>
            <person name="Sheng Y."/>
            <person name="Shibata Y."/>
            <person name="Shimada H."/>
            <person name="Shimada K."/>
            <person name="Silva D."/>
            <person name="Sinclair B."/>
            <person name="Sperling S."/>
            <person name="Stupka E."/>
            <person name="Sugiura K."/>
            <person name="Sultana R."/>
            <person name="Takenaka Y."/>
            <person name="Taki K."/>
            <person name="Tammoja K."/>
            <person name="Tan S.L."/>
            <person name="Tang S."/>
            <person name="Taylor M.S."/>
            <person name="Tegner J."/>
            <person name="Teichmann S.A."/>
            <person name="Ueda H.R."/>
            <person name="van Nimwegen E."/>
            <person name="Verardo R."/>
            <person name="Wei C.L."/>
            <person name="Yagi K."/>
            <person name="Yamanishi H."/>
            <person name="Zabarovsky E."/>
            <person name="Zhu S."/>
            <person name="Zimmer A."/>
            <person name="Hide W."/>
            <person name="Bult C."/>
            <person name="Grimmond S.M."/>
            <person name="Teasdale R.D."/>
            <person name="Liu E.T."/>
            <person name="Brusic V."/>
            <person name="Quackenbush J."/>
            <person name="Wahlestedt C."/>
            <person name="Mattick J.S."/>
            <person name="Hume D.A."/>
            <person name="Kai C."/>
            <person name="Sasaki D."/>
            <person name="Tomaru Y."/>
            <person name="Fukuda S."/>
            <person name="Kanamori-Katayama M."/>
            <person name="Suzuki M."/>
            <person name="Aoki J."/>
            <person name="Arakawa T."/>
            <person name="Iida J."/>
            <person name="Imamura K."/>
            <person name="Itoh M."/>
            <person name="Kato T."/>
            <person name="Kawaji H."/>
            <person name="Kawagashira N."/>
            <person name="Kawashima T."/>
            <person name="Kojima M."/>
            <person name="Kondo S."/>
            <person name="Konno H."/>
            <person name="Nakano K."/>
            <person name="Ninomiya N."/>
            <person name="Nishio T."/>
            <person name="Okada M."/>
            <person name="Plessy C."/>
            <person name="Shibata K."/>
            <person name="Shiraki T."/>
            <person name="Suzuki S."/>
            <person name="Tagami M."/>
            <person name="Waki K."/>
            <person name="Watahiki A."/>
            <person name="Okamura-Oho Y."/>
            <person name="Suzuki H."/>
            <person name="Kawai J."/>
            <person name="Hayashizaki Y."/>
        </authorList>
    </citation>
    <scope>NUCLEOTIDE SEQUENCE [LARGE SCALE MRNA]</scope>
    <source>
        <strain>C57BL/6J</strain>
        <tissue>Bone marrow</tissue>
        <tissue>Embryo</tissue>
        <tissue>Hypothalamus</tissue>
    </source>
</reference>
<reference key="2">
    <citation type="journal article" date="2004" name="Genome Res.">
        <title>The status, quality, and expansion of the NIH full-length cDNA project: the Mammalian Gene Collection (MGC).</title>
        <authorList>
            <consortium name="The MGC Project Team"/>
        </authorList>
    </citation>
    <scope>NUCLEOTIDE SEQUENCE [LARGE SCALE MRNA]</scope>
    <source>
        <strain>C57BL/6J</strain>
        <tissue>Brain</tissue>
        <tissue>Eye</tissue>
    </source>
</reference>
<reference key="3">
    <citation type="journal article" date="2010" name="Cell">
        <title>A tissue-specific atlas of mouse protein phosphorylation and expression.</title>
        <authorList>
            <person name="Huttlin E.L."/>
            <person name="Jedrychowski M.P."/>
            <person name="Elias J.E."/>
            <person name="Goswami T."/>
            <person name="Rad R."/>
            <person name="Beausoleil S.A."/>
            <person name="Villen J."/>
            <person name="Haas W."/>
            <person name="Sowa M.E."/>
            <person name="Gygi S.P."/>
        </authorList>
    </citation>
    <scope>IDENTIFICATION BY MASS SPECTROMETRY [LARGE SCALE ANALYSIS]</scope>
    <source>
        <tissue>Kidney</tissue>
        <tissue>Spleen</tissue>
    </source>
</reference>
<reference key="4">
    <citation type="journal article" date="2015" name="Nat. Commun.">
        <title>Fgf and Esrrb integrate epigenetic and transcriptional networks that regulate self-renewal of trophoblast stem cells.</title>
        <authorList>
            <person name="Latos P.A."/>
            <person name="Goncalves A."/>
            <person name="Oxley D."/>
            <person name="Mohammed H."/>
            <person name="Turro E."/>
            <person name="Hemberger M."/>
        </authorList>
    </citation>
    <scope>INTERACTION WITH ESRRB</scope>
</reference>